<organism>
    <name type="scientific">Levilactobacillus brevis (strain ATCC 367 / BCRC 12310 / CIP 105137 / JCM 1170 / LMG 11437 / NCIMB 947 / NCTC 947)</name>
    <name type="common">Lactobacillus brevis</name>
    <dbReference type="NCBI Taxonomy" id="387344"/>
    <lineage>
        <taxon>Bacteria</taxon>
        <taxon>Bacillati</taxon>
        <taxon>Bacillota</taxon>
        <taxon>Bacilli</taxon>
        <taxon>Lactobacillales</taxon>
        <taxon>Lactobacillaceae</taxon>
        <taxon>Levilactobacillus</taxon>
    </lineage>
</organism>
<protein>
    <recommendedName>
        <fullName evidence="1">Large ribosomal subunit protein bL12</fullName>
    </recommendedName>
    <alternativeName>
        <fullName evidence="2">50S ribosomal protein L7/L12</fullName>
    </alternativeName>
</protein>
<sequence>MAFDKDTIIASLKEASITDLSDLVKAIEDEFGVSAAAPVAAAGAAGGDAAGAKDSFDVEMTESGDAKVKAIKAVREITGLGLKDAKGLVDNVPSVIKEGVSEDEANDIKEKLEAVGAVVTLK</sequence>
<gene>
    <name evidence="1" type="primary">rplL</name>
    <name type="ordered locus">LVIS_0591</name>
</gene>
<name>RL7_LEVBA</name>
<proteinExistence type="inferred from homology"/>
<keyword id="KW-1185">Reference proteome</keyword>
<keyword id="KW-0687">Ribonucleoprotein</keyword>
<keyword id="KW-0689">Ribosomal protein</keyword>
<accession>Q03ST6</accession>
<reference key="1">
    <citation type="journal article" date="2006" name="Proc. Natl. Acad. Sci. U.S.A.">
        <title>Comparative genomics of the lactic acid bacteria.</title>
        <authorList>
            <person name="Makarova K.S."/>
            <person name="Slesarev A."/>
            <person name="Wolf Y.I."/>
            <person name="Sorokin A."/>
            <person name="Mirkin B."/>
            <person name="Koonin E.V."/>
            <person name="Pavlov A."/>
            <person name="Pavlova N."/>
            <person name="Karamychev V."/>
            <person name="Polouchine N."/>
            <person name="Shakhova V."/>
            <person name="Grigoriev I."/>
            <person name="Lou Y."/>
            <person name="Rohksar D."/>
            <person name="Lucas S."/>
            <person name="Huang K."/>
            <person name="Goodstein D.M."/>
            <person name="Hawkins T."/>
            <person name="Plengvidhya V."/>
            <person name="Welker D."/>
            <person name="Hughes J."/>
            <person name="Goh Y."/>
            <person name="Benson A."/>
            <person name="Baldwin K."/>
            <person name="Lee J.-H."/>
            <person name="Diaz-Muniz I."/>
            <person name="Dosti B."/>
            <person name="Smeianov V."/>
            <person name="Wechter W."/>
            <person name="Barabote R."/>
            <person name="Lorca G."/>
            <person name="Altermann E."/>
            <person name="Barrangou R."/>
            <person name="Ganesan B."/>
            <person name="Xie Y."/>
            <person name="Rawsthorne H."/>
            <person name="Tamir D."/>
            <person name="Parker C."/>
            <person name="Breidt F."/>
            <person name="Broadbent J.R."/>
            <person name="Hutkins R."/>
            <person name="O'Sullivan D."/>
            <person name="Steele J."/>
            <person name="Unlu G."/>
            <person name="Saier M.H. Jr."/>
            <person name="Klaenhammer T."/>
            <person name="Richardson P."/>
            <person name="Kozyavkin S."/>
            <person name="Weimer B.C."/>
            <person name="Mills D.A."/>
        </authorList>
    </citation>
    <scope>NUCLEOTIDE SEQUENCE [LARGE SCALE GENOMIC DNA]</scope>
    <source>
        <strain>ATCC 367 / BCRC 12310 / CIP 105137 / JCM 1170 / LMG 11437 / NCIMB 947 / NCTC 947</strain>
    </source>
</reference>
<dbReference type="EMBL" id="CP000416">
    <property type="protein sequence ID" value="ABJ63736.1"/>
    <property type="molecule type" value="Genomic_DNA"/>
</dbReference>
<dbReference type="RefSeq" id="WP_011667361.1">
    <property type="nucleotide sequence ID" value="NC_008497.1"/>
</dbReference>
<dbReference type="SMR" id="Q03ST6"/>
<dbReference type="STRING" id="387344.LVIS_0591"/>
<dbReference type="KEGG" id="lbr:LVIS_0591"/>
<dbReference type="eggNOG" id="COG0222">
    <property type="taxonomic scope" value="Bacteria"/>
</dbReference>
<dbReference type="HOGENOM" id="CLU_086499_3_2_9"/>
<dbReference type="Proteomes" id="UP000001652">
    <property type="component" value="Chromosome"/>
</dbReference>
<dbReference type="GO" id="GO:0022625">
    <property type="term" value="C:cytosolic large ribosomal subunit"/>
    <property type="evidence" value="ECO:0007669"/>
    <property type="project" value="TreeGrafter"/>
</dbReference>
<dbReference type="GO" id="GO:0003729">
    <property type="term" value="F:mRNA binding"/>
    <property type="evidence" value="ECO:0007669"/>
    <property type="project" value="TreeGrafter"/>
</dbReference>
<dbReference type="GO" id="GO:0003735">
    <property type="term" value="F:structural constituent of ribosome"/>
    <property type="evidence" value="ECO:0007669"/>
    <property type="project" value="InterPro"/>
</dbReference>
<dbReference type="GO" id="GO:0006412">
    <property type="term" value="P:translation"/>
    <property type="evidence" value="ECO:0007669"/>
    <property type="project" value="UniProtKB-UniRule"/>
</dbReference>
<dbReference type="FunFam" id="3.30.1390.10:FF:000001">
    <property type="entry name" value="50S ribosomal protein L7/L12"/>
    <property type="match status" value="1"/>
</dbReference>
<dbReference type="Gene3D" id="3.30.1390.10">
    <property type="match status" value="1"/>
</dbReference>
<dbReference type="Gene3D" id="1.20.5.710">
    <property type="entry name" value="Single helix bin"/>
    <property type="match status" value="1"/>
</dbReference>
<dbReference type="HAMAP" id="MF_00368">
    <property type="entry name" value="Ribosomal_bL12"/>
    <property type="match status" value="1"/>
</dbReference>
<dbReference type="InterPro" id="IPR000206">
    <property type="entry name" value="Ribosomal_bL12"/>
</dbReference>
<dbReference type="InterPro" id="IPR013823">
    <property type="entry name" value="Ribosomal_bL12_C"/>
</dbReference>
<dbReference type="InterPro" id="IPR014719">
    <property type="entry name" value="Ribosomal_bL12_C/ClpS-like"/>
</dbReference>
<dbReference type="InterPro" id="IPR008932">
    <property type="entry name" value="Ribosomal_bL12_oligo"/>
</dbReference>
<dbReference type="InterPro" id="IPR036235">
    <property type="entry name" value="Ribosomal_bL12_oligo_N_sf"/>
</dbReference>
<dbReference type="NCBIfam" id="TIGR00855">
    <property type="entry name" value="L12"/>
    <property type="match status" value="1"/>
</dbReference>
<dbReference type="PANTHER" id="PTHR45987">
    <property type="entry name" value="39S RIBOSOMAL PROTEIN L12"/>
    <property type="match status" value="1"/>
</dbReference>
<dbReference type="PANTHER" id="PTHR45987:SF4">
    <property type="entry name" value="LARGE RIBOSOMAL SUBUNIT PROTEIN BL12M"/>
    <property type="match status" value="1"/>
</dbReference>
<dbReference type="Pfam" id="PF00542">
    <property type="entry name" value="Ribosomal_L12"/>
    <property type="match status" value="1"/>
</dbReference>
<dbReference type="Pfam" id="PF16320">
    <property type="entry name" value="Ribosomal_L12_N"/>
    <property type="match status" value="1"/>
</dbReference>
<dbReference type="SUPFAM" id="SSF54736">
    <property type="entry name" value="ClpS-like"/>
    <property type="match status" value="1"/>
</dbReference>
<dbReference type="SUPFAM" id="SSF48300">
    <property type="entry name" value="Ribosomal protein L7/12, oligomerisation (N-terminal) domain"/>
    <property type="match status" value="1"/>
</dbReference>
<comment type="function">
    <text evidence="1">Forms part of the ribosomal stalk which helps the ribosome interact with GTP-bound translation factors. Is thus essential for accurate translation.</text>
</comment>
<comment type="subunit">
    <text evidence="1">Homodimer. Part of the ribosomal stalk of the 50S ribosomal subunit. Forms a multimeric L10(L12)X complex, where L10 forms an elongated spine to which 2 to 4 L12 dimers bind in a sequential fashion. Binds GTP-bound translation factors.</text>
</comment>
<comment type="similarity">
    <text evidence="1">Belongs to the bacterial ribosomal protein bL12 family.</text>
</comment>
<feature type="chain" id="PRO_1000007025" description="Large ribosomal subunit protein bL12">
    <location>
        <begin position="1"/>
        <end position="122"/>
    </location>
</feature>
<evidence type="ECO:0000255" key="1">
    <source>
        <dbReference type="HAMAP-Rule" id="MF_00368"/>
    </source>
</evidence>
<evidence type="ECO:0000305" key="2"/>